<name>HPRT_METEZ</name>
<reference key="1">
    <citation type="submission" date="2010-06" db="EMBL/GenBank/DDBJ databases">
        <title>Complete sequence chromosome of Methanohalobium evestigatum Z-7303.</title>
        <authorList>
            <consortium name="US DOE Joint Genome Institute"/>
            <person name="Lucas S."/>
            <person name="Copeland A."/>
            <person name="Lapidus A."/>
            <person name="Cheng J.-F."/>
            <person name="Bruce D."/>
            <person name="Goodwin L."/>
            <person name="Pitluck S."/>
            <person name="Saunders E."/>
            <person name="Detter J.C."/>
            <person name="Han C."/>
            <person name="Tapia R."/>
            <person name="Land M."/>
            <person name="Hauser L."/>
            <person name="Kyrpides N."/>
            <person name="Mikhailova N."/>
            <person name="Sieprawska-Lupa M."/>
            <person name="Whitman W.B."/>
            <person name="Anderson I."/>
            <person name="Woyke T."/>
        </authorList>
    </citation>
    <scope>NUCLEOTIDE SEQUENCE [LARGE SCALE GENOMIC DNA]</scope>
    <source>
        <strain>ATCC BAA-1072 / DSM 3721 / NBRC 107634 / OCM 161 / Z-7303</strain>
    </source>
</reference>
<organism>
    <name type="scientific">Methanohalobium evestigatum (strain ATCC BAA-1072 / DSM 3721 / NBRC 107634 / OCM 161 / Z-7303)</name>
    <dbReference type="NCBI Taxonomy" id="644295"/>
    <lineage>
        <taxon>Archaea</taxon>
        <taxon>Methanobacteriati</taxon>
        <taxon>Methanobacteriota</taxon>
        <taxon>Stenosarchaea group</taxon>
        <taxon>Methanomicrobia</taxon>
        <taxon>Methanosarcinales</taxon>
        <taxon>Methanosarcinaceae</taxon>
        <taxon>Methanohalobium</taxon>
    </lineage>
</organism>
<keyword id="KW-0963">Cytoplasm</keyword>
<keyword id="KW-0328">Glycosyltransferase</keyword>
<keyword id="KW-0660">Purine salvage</keyword>
<keyword id="KW-1185">Reference proteome</keyword>
<keyword id="KW-0808">Transferase</keyword>
<proteinExistence type="inferred from homology"/>
<dbReference type="EC" id="2.4.2.8" evidence="1"/>
<dbReference type="EMBL" id="CP002069">
    <property type="protein sequence ID" value="ADI74219.1"/>
    <property type="molecule type" value="Genomic_DNA"/>
</dbReference>
<dbReference type="RefSeq" id="WP_013194784.1">
    <property type="nucleotide sequence ID" value="NC_014253.1"/>
</dbReference>
<dbReference type="SMR" id="D7E9E7"/>
<dbReference type="STRING" id="644295.Metev_1361"/>
<dbReference type="GeneID" id="9346996"/>
<dbReference type="KEGG" id="mev:Metev_1361"/>
<dbReference type="HOGENOM" id="CLU_126376_0_0_2"/>
<dbReference type="OrthoDB" id="8323at2157"/>
<dbReference type="UniPathway" id="UPA00591">
    <property type="reaction ID" value="UER00648"/>
</dbReference>
<dbReference type="Proteomes" id="UP000000391">
    <property type="component" value="Chromosome"/>
</dbReference>
<dbReference type="GO" id="GO:0005737">
    <property type="term" value="C:cytoplasm"/>
    <property type="evidence" value="ECO:0007669"/>
    <property type="project" value="UniProtKB-SubCell"/>
</dbReference>
<dbReference type="GO" id="GO:0052657">
    <property type="term" value="F:guanine phosphoribosyltransferase activity"/>
    <property type="evidence" value="ECO:0007669"/>
    <property type="project" value="RHEA"/>
</dbReference>
<dbReference type="GO" id="GO:0004422">
    <property type="term" value="F:hypoxanthine phosphoribosyltransferase activity"/>
    <property type="evidence" value="ECO:0007669"/>
    <property type="project" value="UniProtKB-UniRule"/>
</dbReference>
<dbReference type="GO" id="GO:0032264">
    <property type="term" value="P:IMP salvage"/>
    <property type="evidence" value="ECO:0007669"/>
    <property type="project" value="UniProtKB-UniRule"/>
</dbReference>
<dbReference type="GO" id="GO:0006166">
    <property type="term" value="P:purine ribonucleoside salvage"/>
    <property type="evidence" value="ECO:0007669"/>
    <property type="project" value="UniProtKB-KW"/>
</dbReference>
<dbReference type="CDD" id="cd06223">
    <property type="entry name" value="PRTases_typeI"/>
    <property type="match status" value="1"/>
</dbReference>
<dbReference type="Gene3D" id="3.40.50.2020">
    <property type="match status" value="1"/>
</dbReference>
<dbReference type="HAMAP" id="MF_01467">
    <property type="entry name" value="Hypx_phosphoribosyltr"/>
    <property type="match status" value="1"/>
</dbReference>
<dbReference type="InterPro" id="IPR026597">
    <property type="entry name" value="HGPRTase-like"/>
</dbReference>
<dbReference type="InterPro" id="IPR000836">
    <property type="entry name" value="PRibTrfase_dom"/>
</dbReference>
<dbReference type="InterPro" id="IPR029057">
    <property type="entry name" value="PRTase-like"/>
</dbReference>
<dbReference type="InterPro" id="IPR050118">
    <property type="entry name" value="Pur/Pyrimidine_PRTase"/>
</dbReference>
<dbReference type="NCBIfam" id="NF040646">
    <property type="entry name" value="HPT_Archaea"/>
    <property type="match status" value="1"/>
</dbReference>
<dbReference type="NCBIfam" id="NF002635">
    <property type="entry name" value="PRK02304.1-4"/>
    <property type="match status" value="1"/>
</dbReference>
<dbReference type="PANTHER" id="PTHR43864">
    <property type="entry name" value="HYPOXANTHINE/GUANINE PHOSPHORIBOSYLTRANSFERASE"/>
    <property type="match status" value="1"/>
</dbReference>
<dbReference type="PANTHER" id="PTHR43864:SF1">
    <property type="entry name" value="XANTHINE PHOSPHORIBOSYLTRANSFERASE"/>
    <property type="match status" value="1"/>
</dbReference>
<dbReference type="Pfam" id="PF00156">
    <property type="entry name" value="Pribosyltran"/>
    <property type="match status" value="1"/>
</dbReference>
<dbReference type="SUPFAM" id="SSF53271">
    <property type="entry name" value="PRTase-like"/>
    <property type="match status" value="1"/>
</dbReference>
<dbReference type="PROSITE" id="PS00103">
    <property type="entry name" value="PUR_PYR_PR_TRANSFER"/>
    <property type="match status" value="1"/>
</dbReference>
<protein>
    <recommendedName>
        <fullName evidence="1">Hypoxanthine/guanine phosphoribosyltransferase</fullName>
        <shortName evidence="1">HGPRTase</shortName>
        <ecNumber evidence="1">2.4.2.8</ecNumber>
    </recommendedName>
</protein>
<evidence type="ECO:0000255" key="1">
    <source>
        <dbReference type="HAMAP-Rule" id="MF_01467"/>
    </source>
</evidence>
<sequence length="190" mass="20592">MLDTLQKSLEISPVIKKNNYYYFINPITDGIPSVEPELLQEIANHIVENTKMNVDKIVSIEAMGIPIATSLSLKSGVPLSIIRKRKYGLNGEIAVSQSTGYSKGQLYINGIESGDRILIVDDVVSTGGTLQSVIKALIDAGSIIDEVVVIVERGEGVSKLKEMNIPVKSLIKINVDEKGVSIREVNGGKQ</sequence>
<feature type="chain" id="PRO_0000415475" description="Hypoxanthine/guanine phosphoribosyltransferase">
    <location>
        <begin position="1"/>
        <end position="190"/>
    </location>
</feature>
<gene>
    <name evidence="1" type="primary">hpt</name>
    <name type="ordered locus">Metev_1361</name>
</gene>
<comment type="function">
    <text evidence="1">Catalyzes a salvage reaction resulting in the formation of IMP that is energically less costly than de novo synthesis.</text>
</comment>
<comment type="catalytic activity">
    <reaction evidence="1">
        <text>IMP + diphosphate = hypoxanthine + 5-phospho-alpha-D-ribose 1-diphosphate</text>
        <dbReference type="Rhea" id="RHEA:17973"/>
        <dbReference type="ChEBI" id="CHEBI:17368"/>
        <dbReference type="ChEBI" id="CHEBI:33019"/>
        <dbReference type="ChEBI" id="CHEBI:58017"/>
        <dbReference type="ChEBI" id="CHEBI:58053"/>
        <dbReference type="EC" id="2.4.2.8"/>
    </reaction>
</comment>
<comment type="catalytic activity">
    <reaction evidence="1">
        <text>GMP + diphosphate = guanine + 5-phospho-alpha-D-ribose 1-diphosphate</text>
        <dbReference type="Rhea" id="RHEA:25424"/>
        <dbReference type="ChEBI" id="CHEBI:16235"/>
        <dbReference type="ChEBI" id="CHEBI:33019"/>
        <dbReference type="ChEBI" id="CHEBI:58017"/>
        <dbReference type="ChEBI" id="CHEBI:58115"/>
        <dbReference type="EC" id="2.4.2.8"/>
    </reaction>
</comment>
<comment type="pathway">
    <text evidence="1">Purine metabolism; IMP biosynthesis via salvage pathway; IMP from hypoxanthine: step 1/1.</text>
</comment>
<comment type="subunit">
    <text evidence="1">Homodimer.</text>
</comment>
<comment type="subcellular location">
    <subcellularLocation>
        <location evidence="1">Cytoplasm</location>
    </subcellularLocation>
</comment>
<comment type="similarity">
    <text evidence="1">Belongs to the purine/pyrimidine phosphoribosyltransferase family. Archaeal HPRT subfamily.</text>
</comment>
<accession>D7E9E7</accession>